<reference key="1">
    <citation type="journal article" date="2005" name="PLoS Biol.">
        <title>Major structural differences and novel potential virulence mechanisms from the genomes of multiple Campylobacter species.</title>
        <authorList>
            <person name="Fouts D.E."/>
            <person name="Mongodin E.F."/>
            <person name="Mandrell R.E."/>
            <person name="Miller W.G."/>
            <person name="Rasko D.A."/>
            <person name="Ravel J."/>
            <person name="Brinkac L.M."/>
            <person name="DeBoy R.T."/>
            <person name="Parker C.T."/>
            <person name="Daugherty S.C."/>
            <person name="Dodson R.J."/>
            <person name="Durkin A.S."/>
            <person name="Madupu R."/>
            <person name="Sullivan S.A."/>
            <person name="Shetty J.U."/>
            <person name="Ayodeji M.A."/>
            <person name="Shvartsbeyn A."/>
            <person name="Schatz M.C."/>
            <person name="Badger J.H."/>
            <person name="Fraser C.M."/>
            <person name="Nelson K.E."/>
        </authorList>
    </citation>
    <scope>NUCLEOTIDE SEQUENCE [LARGE SCALE GENOMIC DNA]</scope>
    <source>
        <strain>RM1221</strain>
    </source>
</reference>
<comment type="catalytic activity">
    <reaction evidence="1">
        <text>L-citrulline + L-aspartate + ATP = 2-(N(omega)-L-arginino)succinate + AMP + diphosphate + H(+)</text>
        <dbReference type="Rhea" id="RHEA:10932"/>
        <dbReference type="ChEBI" id="CHEBI:15378"/>
        <dbReference type="ChEBI" id="CHEBI:29991"/>
        <dbReference type="ChEBI" id="CHEBI:30616"/>
        <dbReference type="ChEBI" id="CHEBI:33019"/>
        <dbReference type="ChEBI" id="CHEBI:57472"/>
        <dbReference type="ChEBI" id="CHEBI:57743"/>
        <dbReference type="ChEBI" id="CHEBI:456215"/>
        <dbReference type="EC" id="6.3.4.5"/>
    </reaction>
</comment>
<comment type="pathway">
    <text evidence="1">Amino-acid biosynthesis; L-arginine biosynthesis; L-arginine from L-ornithine and carbamoyl phosphate: step 2/3.</text>
</comment>
<comment type="subunit">
    <text evidence="1">Homotetramer.</text>
</comment>
<comment type="subcellular location">
    <subcellularLocation>
        <location evidence="1">Cytoplasm</location>
    </subcellularLocation>
</comment>
<comment type="similarity">
    <text evidence="1">Belongs to the argininosuccinate synthase family. Type 1 subfamily.</text>
</comment>
<sequence>MKNEVKKVVLAYSGGLDTSIILKWLQDEYNCEVVTFTADIGQGEELEPARKKALSLGIKEENIFIKDLRDEFVKDYVFPMFRANAIYEGEYLLGTSIARPLIAKTQAQIALQTGADAVSHGATGKGNDQVRFELGYLAFNPDLKIIAPWREWDLNSREKLLAYAQKHGIDISKKKGKSPYSMDANLLHISYEGLVLEDPAHAPEEDMWRWSKSPKDAPNESEIIELDFQKGDLVAINGEKLSPAGLLTKLNELGCKHGIGRLDIVENRYVGMKSRGCYETPGGTILLKAHRALESITLDREAAHLKDELMPKYASLIYNGYWFSPERMMLQALIDESQIHANGRVKLELYKGNVIVIGRESSNDSLFNAAYCTFEEDEVYNQKDAAGFIKLNALRFIIAGKNGRKF</sequence>
<feature type="chain" id="PRO_0000148581" description="Argininosuccinate synthase">
    <location>
        <begin position="1"/>
        <end position="406"/>
    </location>
</feature>
<feature type="binding site" evidence="1">
    <location>
        <begin position="11"/>
        <end position="19"/>
    </location>
    <ligand>
        <name>ATP</name>
        <dbReference type="ChEBI" id="CHEBI:30616"/>
    </ligand>
</feature>
<feature type="binding site" evidence="1">
    <location>
        <position position="38"/>
    </location>
    <ligand>
        <name>ATP</name>
        <dbReference type="ChEBI" id="CHEBI:30616"/>
    </ligand>
</feature>
<feature type="binding site" evidence="1">
    <location>
        <position position="91"/>
    </location>
    <ligand>
        <name>L-citrulline</name>
        <dbReference type="ChEBI" id="CHEBI:57743"/>
    </ligand>
</feature>
<feature type="binding site" evidence="1">
    <location>
        <position position="96"/>
    </location>
    <ligand>
        <name>L-citrulline</name>
        <dbReference type="ChEBI" id="CHEBI:57743"/>
    </ligand>
</feature>
<feature type="binding site" evidence="1">
    <location>
        <position position="121"/>
    </location>
    <ligand>
        <name>ATP</name>
        <dbReference type="ChEBI" id="CHEBI:30616"/>
    </ligand>
</feature>
<feature type="binding site" evidence="1">
    <location>
        <position position="123"/>
    </location>
    <ligand>
        <name>L-aspartate</name>
        <dbReference type="ChEBI" id="CHEBI:29991"/>
    </ligand>
</feature>
<feature type="binding site" evidence="1">
    <location>
        <position position="127"/>
    </location>
    <ligand>
        <name>L-aspartate</name>
        <dbReference type="ChEBI" id="CHEBI:29991"/>
    </ligand>
</feature>
<feature type="binding site" evidence="1">
    <location>
        <position position="127"/>
    </location>
    <ligand>
        <name>L-citrulline</name>
        <dbReference type="ChEBI" id="CHEBI:57743"/>
    </ligand>
</feature>
<feature type="binding site" evidence="1">
    <location>
        <position position="128"/>
    </location>
    <ligand>
        <name>L-aspartate</name>
        <dbReference type="ChEBI" id="CHEBI:29991"/>
    </ligand>
</feature>
<feature type="binding site" evidence="1">
    <location>
        <position position="131"/>
    </location>
    <ligand>
        <name>L-citrulline</name>
        <dbReference type="ChEBI" id="CHEBI:57743"/>
    </ligand>
</feature>
<feature type="binding site" evidence="1">
    <location>
        <position position="181"/>
    </location>
    <ligand>
        <name>L-citrulline</name>
        <dbReference type="ChEBI" id="CHEBI:57743"/>
    </ligand>
</feature>
<feature type="binding site" evidence="1">
    <location>
        <position position="190"/>
    </location>
    <ligand>
        <name>L-citrulline</name>
        <dbReference type="ChEBI" id="CHEBI:57743"/>
    </ligand>
</feature>
<feature type="binding site" evidence="1">
    <location>
        <position position="266"/>
    </location>
    <ligand>
        <name>L-citrulline</name>
        <dbReference type="ChEBI" id="CHEBI:57743"/>
    </ligand>
</feature>
<feature type="binding site" evidence="1">
    <location>
        <position position="278"/>
    </location>
    <ligand>
        <name>L-citrulline</name>
        <dbReference type="ChEBI" id="CHEBI:57743"/>
    </ligand>
</feature>
<accession>Q5HVA9</accession>
<name>ASSY_CAMJR</name>
<keyword id="KW-0028">Amino-acid biosynthesis</keyword>
<keyword id="KW-0055">Arginine biosynthesis</keyword>
<keyword id="KW-0067">ATP-binding</keyword>
<keyword id="KW-0963">Cytoplasm</keyword>
<keyword id="KW-0436">Ligase</keyword>
<keyword id="KW-0547">Nucleotide-binding</keyword>
<dbReference type="EC" id="6.3.4.5" evidence="1"/>
<dbReference type="EMBL" id="CP000025">
    <property type="protein sequence ID" value="AAW34558.1"/>
    <property type="molecule type" value="Genomic_DNA"/>
</dbReference>
<dbReference type="RefSeq" id="WP_002867646.1">
    <property type="nucleotide sequence ID" value="NC_003912.7"/>
</dbReference>
<dbReference type="SMR" id="Q5HVA9"/>
<dbReference type="KEGG" id="cjr:CJE0767"/>
<dbReference type="HOGENOM" id="CLU_032784_4_2_7"/>
<dbReference type="UniPathway" id="UPA00068">
    <property type="reaction ID" value="UER00113"/>
</dbReference>
<dbReference type="GO" id="GO:0005737">
    <property type="term" value="C:cytoplasm"/>
    <property type="evidence" value="ECO:0007669"/>
    <property type="project" value="UniProtKB-SubCell"/>
</dbReference>
<dbReference type="GO" id="GO:0004055">
    <property type="term" value="F:argininosuccinate synthase activity"/>
    <property type="evidence" value="ECO:0007669"/>
    <property type="project" value="UniProtKB-UniRule"/>
</dbReference>
<dbReference type="GO" id="GO:0005524">
    <property type="term" value="F:ATP binding"/>
    <property type="evidence" value="ECO:0007669"/>
    <property type="project" value="UniProtKB-UniRule"/>
</dbReference>
<dbReference type="GO" id="GO:0000053">
    <property type="term" value="P:argininosuccinate metabolic process"/>
    <property type="evidence" value="ECO:0007669"/>
    <property type="project" value="TreeGrafter"/>
</dbReference>
<dbReference type="GO" id="GO:0006526">
    <property type="term" value="P:L-arginine biosynthetic process"/>
    <property type="evidence" value="ECO:0007669"/>
    <property type="project" value="UniProtKB-UniRule"/>
</dbReference>
<dbReference type="GO" id="GO:0000050">
    <property type="term" value="P:urea cycle"/>
    <property type="evidence" value="ECO:0007669"/>
    <property type="project" value="TreeGrafter"/>
</dbReference>
<dbReference type="CDD" id="cd01999">
    <property type="entry name" value="ASS"/>
    <property type="match status" value="1"/>
</dbReference>
<dbReference type="FunFam" id="3.40.50.620:FF:000019">
    <property type="entry name" value="Argininosuccinate synthase"/>
    <property type="match status" value="1"/>
</dbReference>
<dbReference type="FunFam" id="3.90.1260.10:FF:000007">
    <property type="entry name" value="Argininosuccinate synthase"/>
    <property type="match status" value="1"/>
</dbReference>
<dbReference type="Gene3D" id="3.90.1260.10">
    <property type="entry name" value="Argininosuccinate synthetase, chain A, domain 2"/>
    <property type="match status" value="1"/>
</dbReference>
<dbReference type="Gene3D" id="3.40.50.620">
    <property type="entry name" value="HUPs"/>
    <property type="match status" value="1"/>
</dbReference>
<dbReference type="Gene3D" id="1.20.5.470">
    <property type="entry name" value="Single helix bin"/>
    <property type="match status" value="1"/>
</dbReference>
<dbReference type="HAMAP" id="MF_00005">
    <property type="entry name" value="Arg_succ_synth_type1"/>
    <property type="match status" value="1"/>
</dbReference>
<dbReference type="InterPro" id="IPR048268">
    <property type="entry name" value="Arginosuc_syn_C"/>
</dbReference>
<dbReference type="InterPro" id="IPR048267">
    <property type="entry name" value="Arginosuc_syn_N"/>
</dbReference>
<dbReference type="InterPro" id="IPR001518">
    <property type="entry name" value="Arginosuc_synth"/>
</dbReference>
<dbReference type="InterPro" id="IPR018223">
    <property type="entry name" value="Arginosuc_synth_CS"/>
</dbReference>
<dbReference type="InterPro" id="IPR023434">
    <property type="entry name" value="Arginosuc_synth_type_1_subfam"/>
</dbReference>
<dbReference type="InterPro" id="IPR024074">
    <property type="entry name" value="AS_cat/multimer_dom_body"/>
</dbReference>
<dbReference type="InterPro" id="IPR014729">
    <property type="entry name" value="Rossmann-like_a/b/a_fold"/>
</dbReference>
<dbReference type="NCBIfam" id="TIGR00032">
    <property type="entry name" value="argG"/>
    <property type="match status" value="1"/>
</dbReference>
<dbReference type="NCBIfam" id="NF001770">
    <property type="entry name" value="PRK00509.1"/>
    <property type="match status" value="1"/>
</dbReference>
<dbReference type="PANTHER" id="PTHR11587">
    <property type="entry name" value="ARGININOSUCCINATE SYNTHASE"/>
    <property type="match status" value="1"/>
</dbReference>
<dbReference type="PANTHER" id="PTHR11587:SF2">
    <property type="entry name" value="ARGININOSUCCINATE SYNTHASE"/>
    <property type="match status" value="1"/>
</dbReference>
<dbReference type="Pfam" id="PF20979">
    <property type="entry name" value="Arginosuc_syn_C"/>
    <property type="match status" value="1"/>
</dbReference>
<dbReference type="Pfam" id="PF00764">
    <property type="entry name" value="Arginosuc_synth"/>
    <property type="match status" value="1"/>
</dbReference>
<dbReference type="SUPFAM" id="SSF52402">
    <property type="entry name" value="Adenine nucleotide alpha hydrolases-like"/>
    <property type="match status" value="1"/>
</dbReference>
<dbReference type="SUPFAM" id="SSF69864">
    <property type="entry name" value="Argininosuccinate synthetase, C-terminal domain"/>
    <property type="match status" value="1"/>
</dbReference>
<dbReference type="PROSITE" id="PS00564">
    <property type="entry name" value="ARGININOSUCCIN_SYN_1"/>
    <property type="match status" value="1"/>
</dbReference>
<dbReference type="PROSITE" id="PS00565">
    <property type="entry name" value="ARGININOSUCCIN_SYN_2"/>
    <property type="match status" value="1"/>
</dbReference>
<proteinExistence type="inferred from homology"/>
<gene>
    <name evidence="1" type="primary">argG</name>
    <name type="ordered locus">CJE0767</name>
</gene>
<evidence type="ECO:0000255" key="1">
    <source>
        <dbReference type="HAMAP-Rule" id="MF_00005"/>
    </source>
</evidence>
<protein>
    <recommendedName>
        <fullName evidence="1">Argininosuccinate synthase</fullName>
        <ecNumber evidence="1">6.3.4.5</ecNumber>
    </recommendedName>
    <alternativeName>
        <fullName evidence="1">Citrulline--aspartate ligase</fullName>
    </alternativeName>
</protein>
<organism>
    <name type="scientific">Campylobacter jejuni (strain RM1221)</name>
    <dbReference type="NCBI Taxonomy" id="195099"/>
    <lineage>
        <taxon>Bacteria</taxon>
        <taxon>Pseudomonadati</taxon>
        <taxon>Campylobacterota</taxon>
        <taxon>Epsilonproteobacteria</taxon>
        <taxon>Campylobacterales</taxon>
        <taxon>Campylobacteraceae</taxon>
        <taxon>Campylobacter</taxon>
    </lineage>
</organism>